<keyword id="KW-1185">Reference proteome</keyword>
<keyword id="KW-0687">Ribonucleoprotein</keyword>
<keyword id="KW-0689">Ribosomal protein</keyword>
<keyword id="KW-0694">RNA-binding</keyword>
<keyword id="KW-0699">rRNA-binding</keyword>
<gene>
    <name evidence="1" type="primary">rplT</name>
    <name type="ordered locus">SDY_1811</name>
</gene>
<protein>
    <recommendedName>
        <fullName evidence="1">Large ribosomal subunit protein bL20</fullName>
    </recommendedName>
    <alternativeName>
        <fullName evidence="2">50S ribosomal protein L20</fullName>
    </alternativeName>
</protein>
<reference key="1">
    <citation type="journal article" date="2005" name="Nucleic Acids Res.">
        <title>Genome dynamics and diversity of Shigella species, the etiologic agents of bacillary dysentery.</title>
        <authorList>
            <person name="Yang F."/>
            <person name="Yang J."/>
            <person name="Zhang X."/>
            <person name="Chen L."/>
            <person name="Jiang Y."/>
            <person name="Yan Y."/>
            <person name="Tang X."/>
            <person name="Wang J."/>
            <person name="Xiong Z."/>
            <person name="Dong J."/>
            <person name="Xue Y."/>
            <person name="Zhu Y."/>
            <person name="Xu X."/>
            <person name="Sun L."/>
            <person name="Chen S."/>
            <person name="Nie H."/>
            <person name="Peng J."/>
            <person name="Xu J."/>
            <person name="Wang Y."/>
            <person name="Yuan Z."/>
            <person name="Wen Y."/>
            <person name="Yao Z."/>
            <person name="Shen Y."/>
            <person name="Qiang B."/>
            <person name="Hou Y."/>
            <person name="Yu J."/>
            <person name="Jin Q."/>
        </authorList>
    </citation>
    <scope>NUCLEOTIDE SEQUENCE [LARGE SCALE GENOMIC DNA]</scope>
    <source>
        <strain>Sd197</strain>
    </source>
</reference>
<comment type="function">
    <text evidence="1">Binds directly to 23S ribosomal RNA and is necessary for the in vitro assembly process of the 50S ribosomal subunit. It is not involved in the protein synthesizing functions of that subunit.</text>
</comment>
<comment type="similarity">
    <text evidence="1">Belongs to the bacterial ribosomal protein bL20 family.</text>
</comment>
<feature type="chain" id="PRO_0000243735" description="Large ribosomal subunit protein bL20">
    <location>
        <begin position="1"/>
        <end position="118"/>
    </location>
</feature>
<evidence type="ECO:0000255" key="1">
    <source>
        <dbReference type="HAMAP-Rule" id="MF_00382"/>
    </source>
</evidence>
<evidence type="ECO:0000305" key="2"/>
<proteinExistence type="inferred from homology"/>
<organism>
    <name type="scientific">Shigella dysenteriae serotype 1 (strain Sd197)</name>
    <dbReference type="NCBI Taxonomy" id="300267"/>
    <lineage>
        <taxon>Bacteria</taxon>
        <taxon>Pseudomonadati</taxon>
        <taxon>Pseudomonadota</taxon>
        <taxon>Gammaproteobacteria</taxon>
        <taxon>Enterobacterales</taxon>
        <taxon>Enterobacteriaceae</taxon>
        <taxon>Shigella</taxon>
    </lineage>
</organism>
<accession>Q32FI3</accession>
<sequence length="118" mass="13527">MARVKRGVIARTRHKKILKQAKGYYGARSRVYRVAFQAVIKAGQYAYRDRRQRKRQFRQLWIARINAAARQNGISYSKFINGLKKASVEIDRKILADIAVFDKVAFTALVEKAKAALA</sequence>
<name>RL20_SHIDS</name>
<dbReference type="EMBL" id="CP000034">
    <property type="protein sequence ID" value="ABB61922.1"/>
    <property type="molecule type" value="Genomic_DNA"/>
</dbReference>
<dbReference type="RefSeq" id="WP_000124857.1">
    <property type="nucleotide sequence ID" value="NC_007606.1"/>
</dbReference>
<dbReference type="RefSeq" id="YP_403413.1">
    <property type="nucleotide sequence ID" value="NC_007606.1"/>
</dbReference>
<dbReference type="SMR" id="Q32FI3"/>
<dbReference type="STRING" id="300267.SDY_1811"/>
<dbReference type="EnsemblBacteria" id="ABB61922">
    <property type="protein sequence ID" value="ABB61922"/>
    <property type="gene ID" value="SDY_1811"/>
</dbReference>
<dbReference type="KEGG" id="sdy:SDY_1811"/>
<dbReference type="PATRIC" id="fig|300267.13.peg.2182"/>
<dbReference type="HOGENOM" id="CLU_123265_0_1_6"/>
<dbReference type="Proteomes" id="UP000002716">
    <property type="component" value="Chromosome"/>
</dbReference>
<dbReference type="GO" id="GO:1990904">
    <property type="term" value="C:ribonucleoprotein complex"/>
    <property type="evidence" value="ECO:0007669"/>
    <property type="project" value="UniProtKB-KW"/>
</dbReference>
<dbReference type="GO" id="GO:0005840">
    <property type="term" value="C:ribosome"/>
    <property type="evidence" value="ECO:0007669"/>
    <property type="project" value="UniProtKB-KW"/>
</dbReference>
<dbReference type="GO" id="GO:0019843">
    <property type="term" value="F:rRNA binding"/>
    <property type="evidence" value="ECO:0007669"/>
    <property type="project" value="UniProtKB-UniRule"/>
</dbReference>
<dbReference type="GO" id="GO:0003735">
    <property type="term" value="F:structural constituent of ribosome"/>
    <property type="evidence" value="ECO:0007669"/>
    <property type="project" value="InterPro"/>
</dbReference>
<dbReference type="GO" id="GO:0000027">
    <property type="term" value="P:ribosomal large subunit assembly"/>
    <property type="evidence" value="ECO:0007669"/>
    <property type="project" value="UniProtKB-UniRule"/>
</dbReference>
<dbReference type="GO" id="GO:0006412">
    <property type="term" value="P:translation"/>
    <property type="evidence" value="ECO:0007669"/>
    <property type="project" value="InterPro"/>
</dbReference>
<dbReference type="CDD" id="cd07026">
    <property type="entry name" value="Ribosomal_L20"/>
    <property type="match status" value="1"/>
</dbReference>
<dbReference type="FunFam" id="1.10.1900.20:FF:000001">
    <property type="entry name" value="50S ribosomal protein L20"/>
    <property type="match status" value="1"/>
</dbReference>
<dbReference type="Gene3D" id="6.10.160.10">
    <property type="match status" value="1"/>
</dbReference>
<dbReference type="Gene3D" id="1.10.1900.20">
    <property type="entry name" value="Ribosomal protein L20"/>
    <property type="match status" value="1"/>
</dbReference>
<dbReference type="HAMAP" id="MF_00382">
    <property type="entry name" value="Ribosomal_bL20"/>
    <property type="match status" value="1"/>
</dbReference>
<dbReference type="InterPro" id="IPR005813">
    <property type="entry name" value="Ribosomal_bL20"/>
</dbReference>
<dbReference type="InterPro" id="IPR049946">
    <property type="entry name" value="RIBOSOMAL_L20_CS"/>
</dbReference>
<dbReference type="InterPro" id="IPR035566">
    <property type="entry name" value="Ribosomal_protein_bL20_C"/>
</dbReference>
<dbReference type="NCBIfam" id="TIGR01032">
    <property type="entry name" value="rplT_bact"/>
    <property type="match status" value="1"/>
</dbReference>
<dbReference type="PANTHER" id="PTHR10986">
    <property type="entry name" value="39S RIBOSOMAL PROTEIN L20"/>
    <property type="match status" value="1"/>
</dbReference>
<dbReference type="Pfam" id="PF00453">
    <property type="entry name" value="Ribosomal_L20"/>
    <property type="match status" value="1"/>
</dbReference>
<dbReference type="PRINTS" id="PR00062">
    <property type="entry name" value="RIBOSOMALL20"/>
</dbReference>
<dbReference type="SUPFAM" id="SSF74731">
    <property type="entry name" value="Ribosomal protein L20"/>
    <property type="match status" value="1"/>
</dbReference>
<dbReference type="PROSITE" id="PS00937">
    <property type="entry name" value="RIBOSOMAL_L20"/>
    <property type="match status" value="1"/>
</dbReference>